<comment type="similarity">
    <text evidence="1">Belongs to the universal ribosomal protein uS9 family.</text>
</comment>
<protein>
    <recommendedName>
        <fullName evidence="1">Small ribosomal subunit protein uS9</fullName>
    </recommendedName>
    <alternativeName>
        <fullName evidence="2">30S ribosomal protein S9</fullName>
    </alternativeName>
</protein>
<evidence type="ECO:0000255" key="1">
    <source>
        <dbReference type="HAMAP-Rule" id="MF_00532"/>
    </source>
</evidence>
<evidence type="ECO:0000305" key="2"/>
<feature type="chain" id="PRO_0000111442" description="Small ribosomal subunit protein uS9">
    <location>
        <begin position="1"/>
        <end position="129"/>
    </location>
</feature>
<dbReference type="EMBL" id="BX571662">
    <property type="protein sequence ID" value="CAE11132.1"/>
    <property type="molecule type" value="Genomic_DNA"/>
</dbReference>
<dbReference type="RefSeq" id="WP_011139914.1">
    <property type="nucleotide sequence ID" value="NC_005090.1"/>
</dbReference>
<dbReference type="SMR" id="Q7M7R1"/>
<dbReference type="STRING" id="273121.WS2137"/>
<dbReference type="KEGG" id="wsu:WS2137"/>
<dbReference type="eggNOG" id="COG0103">
    <property type="taxonomic scope" value="Bacteria"/>
</dbReference>
<dbReference type="HOGENOM" id="CLU_046483_2_1_7"/>
<dbReference type="Proteomes" id="UP000000422">
    <property type="component" value="Chromosome"/>
</dbReference>
<dbReference type="GO" id="GO:0022627">
    <property type="term" value="C:cytosolic small ribosomal subunit"/>
    <property type="evidence" value="ECO:0007669"/>
    <property type="project" value="TreeGrafter"/>
</dbReference>
<dbReference type="GO" id="GO:0003723">
    <property type="term" value="F:RNA binding"/>
    <property type="evidence" value="ECO:0007669"/>
    <property type="project" value="TreeGrafter"/>
</dbReference>
<dbReference type="GO" id="GO:0003735">
    <property type="term" value="F:structural constituent of ribosome"/>
    <property type="evidence" value="ECO:0007669"/>
    <property type="project" value="InterPro"/>
</dbReference>
<dbReference type="GO" id="GO:0006412">
    <property type="term" value="P:translation"/>
    <property type="evidence" value="ECO:0007669"/>
    <property type="project" value="UniProtKB-UniRule"/>
</dbReference>
<dbReference type="FunFam" id="3.30.230.10:FF:000025">
    <property type="entry name" value="30S ribosomal protein S9"/>
    <property type="match status" value="1"/>
</dbReference>
<dbReference type="Gene3D" id="3.30.230.10">
    <property type="match status" value="1"/>
</dbReference>
<dbReference type="HAMAP" id="MF_00532_B">
    <property type="entry name" value="Ribosomal_uS9_B"/>
    <property type="match status" value="1"/>
</dbReference>
<dbReference type="InterPro" id="IPR020568">
    <property type="entry name" value="Ribosomal_Su5_D2-typ_SF"/>
</dbReference>
<dbReference type="InterPro" id="IPR000754">
    <property type="entry name" value="Ribosomal_uS9"/>
</dbReference>
<dbReference type="InterPro" id="IPR023035">
    <property type="entry name" value="Ribosomal_uS9_bac/plastid"/>
</dbReference>
<dbReference type="InterPro" id="IPR020574">
    <property type="entry name" value="Ribosomal_uS9_CS"/>
</dbReference>
<dbReference type="InterPro" id="IPR014721">
    <property type="entry name" value="Ribsml_uS5_D2-typ_fold_subgr"/>
</dbReference>
<dbReference type="NCBIfam" id="NF001099">
    <property type="entry name" value="PRK00132.1"/>
    <property type="match status" value="1"/>
</dbReference>
<dbReference type="PANTHER" id="PTHR21569">
    <property type="entry name" value="RIBOSOMAL PROTEIN S9"/>
    <property type="match status" value="1"/>
</dbReference>
<dbReference type="PANTHER" id="PTHR21569:SF1">
    <property type="entry name" value="SMALL RIBOSOMAL SUBUNIT PROTEIN US9M"/>
    <property type="match status" value="1"/>
</dbReference>
<dbReference type="Pfam" id="PF00380">
    <property type="entry name" value="Ribosomal_S9"/>
    <property type="match status" value="1"/>
</dbReference>
<dbReference type="SUPFAM" id="SSF54211">
    <property type="entry name" value="Ribosomal protein S5 domain 2-like"/>
    <property type="match status" value="1"/>
</dbReference>
<dbReference type="PROSITE" id="PS00360">
    <property type="entry name" value="RIBOSOMAL_S9"/>
    <property type="match status" value="1"/>
</dbReference>
<organism>
    <name type="scientific">Wolinella succinogenes (strain ATCC 29543 / DSM 1740 / CCUG 13145 / JCM 31913 / LMG 7466 / NCTC 11488 / FDC 602W)</name>
    <name type="common">Vibrio succinogenes</name>
    <dbReference type="NCBI Taxonomy" id="273121"/>
    <lineage>
        <taxon>Bacteria</taxon>
        <taxon>Pseudomonadati</taxon>
        <taxon>Campylobacterota</taxon>
        <taxon>Epsilonproteobacteria</taxon>
        <taxon>Campylobacterales</taxon>
        <taxon>Helicobacteraceae</taxon>
        <taxon>Wolinella</taxon>
    </lineage>
</organism>
<accession>Q7M7R1</accession>
<name>RS9_WOLSU</name>
<keyword id="KW-1185">Reference proteome</keyword>
<keyword id="KW-0687">Ribonucleoprotein</keyword>
<keyword id="KW-0689">Ribosomal protein</keyword>
<gene>
    <name evidence="1" type="primary">rpsI</name>
    <name type="ordered locus">WS2137</name>
</gene>
<reference key="1">
    <citation type="journal article" date="2003" name="Proc. Natl. Acad. Sci. U.S.A.">
        <title>Complete genome sequence and analysis of Wolinella succinogenes.</title>
        <authorList>
            <person name="Baar C."/>
            <person name="Eppinger M."/>
            <person name="Raddatz G."/>
            <person name="Simon J."/>
            <person name="Lanz C."/>
            <person name="Klimmek O."/>
            <person name="Nandakumar R."/>
            <person name="Gross R."/>
            <person name="Rosinus A."/>
            <person name="Keller H."/>
            <person name="Jagtap P."/>
            <person name="Linke B."/>
            <person name="Meyer F."/>
            <person name="Lederer H."/>
            <person name="Schuster S.C."/>
        </authorList>
    </citation>
    <scope>NUCLEOTIDE SEQUENCE [LARGE SCALE GENOMIC DNA]</scope>
    <source>
        <strain>ATCC 29543 / DSM 1740 / CCUG 13145 / JCM 31913 / LMG 7466 / NCTC 11488 / FDC 602W</strain>
    </source>
</reference>
<proteinExistence type="inferred from homology"/>
<sequence length="129" mass="14211">MAKIYATGKRKTAIAKVWLTPGSGKLTVNGTTLNDWLGGHEAIKMKVMQPLLLTKQEKSVDIVSVTLGGGYSAQAEALRHGISKALSAYDIAFRAILKPKGLLTRDSRVVERKKYGKRKARRSPQFSKR</sequence>